<name>PUR7_BACCN</name>
<accession>A7GKH5</accession>
<comment type="catalytic activity">
    <reaction evidence="1">
        <text>5-amino-1-(5-phospho-D-ribosyl)imidazole-4-carboxylate + L-aspartate + ATP = (2S)-2-[5-amino-1-(5-phospho-beta-D-ribosyl)imidazole-4-carboxamido]succinate + ADP + phosphate + 2 H(+)</text>
        <dbReference type="Rhea" id="RHEA:22628"/>
        <dbReference type="ChEBI" id="CHEBI:15378"/>
        <dbReference type="ChEBI" id="CHEBI:29991"/>
        <dbReference type="ChEBI" id="CHEBI:30616"/>
        <dbReference type="ChEBI" id="CHEBI:43474"/>
        <dbReference type="ChEBI" id="CHEBI:58443"/>
        <dbReference type="ChEBI" id="CHEBI:77657"/>
        <dbReference type="ChEBI" id="CHEBI:456216"/>
        <dbReference type="EC" id="6.3.2.6"/>
    </reaction>
</comment>
<comment type="pathway">
    <text evidence="1">Purine metabolism; IMP biosynthesis via de novo pathway; 5-amino-1-(5-phospho-D-ribosyl)imidazole-4-carboxamide from 5-amino-1-(5-phospho-D-ribosyl)imidazole-4-carboxylate: step 1/2.</text>
</comment>
<comment type="similarity">
    <text evidence="1">Belongs to the SAICAR synthetase family.</text>
</comment>
<keyword id="KW-0067">ATP-binding</keyword>
<keyword id="KW-0436">Ligase</keyword>
<keyword id="KW-0547">Nucleotide-binding</keyword>
<keyword id="KW-0658">Purine biosynthesis</keyword>
<evidence type="ECO:0000255" key="1">
    <source>
        <dbReference type="HAMAP-Rule" id="MF_00137"/>
    </source>
</evidence>
<feature type="chain" id="PRO_1000076444" description="Phosphoribosylaminoimidazole-succinocarboxamide synthase">
    <location>
        <begin position="1"/>
        <end position="239"/>
    </location>
</feature>
<gene>
    <name evidence="1" type="primary">purC</name>
    <name type="ordered locus">Bcer98_0270</name>
</gene>
<sequence>MQKLELLYEGKAKRIYRTEAADMVWIEYKDSATAFNGEKKATITGKGRLNNEITTFLFRKLQEVGIETHFVKKLSDTEQLVKKVSIIPLEVVTRNVIAGSLSKRLGMEEGIPLAKPIVEFYYKDDDLGDPLVTEDHIRVLNAATLEQISTLREKALRINQVLIEHFASCRVRLIDFKLEFGITEEGKIVLADEISPDTCRLWDEESNEKFDKDVFRRDLGNLTEAYEEILKRLGGASHV</sequence>
<dbReference type="EC" id="6.3.2.6" evidence="1"/>
<dbReference type="EMBL" id="CP000764">
    <property type="protein sequence ID" value="ABS20633.1"/>
    <property type="molecule type" value="Genomic_DNA"/>
</dbReference>
<dbReference type="RefSeq" id="WP_011983392.1">
    <property type="nucleotide sequence ID" value="NC_009674.1"/>
</dbReference>
<dbReference type="SMR" id="A7GKH5"/>
<dbReference type="STRING" id="315749.Bcer98_0270"/>
<dbReference type="GeneID" id="33895625"/>
<dbReference type="KEGG" id="bcy:Bcer98_0270"/>
<dbReference type="eggNOG" id="COG0152">
    <property type="taxonomic scope" value="Bacteria"/>
</dbReference>
<dbReference type="HOGENOM" id="CLU_061495_2_0_9"/>
<dbReference type="OrthoDB" id="9801549at2"/>
<dbReference type="UniPathway" id="UPA00074">
    <property type="reaction ID" value="UER00131"/>
</dbReference>
<dbReference type="Proteomes" id="UP000002300">
    <property type="component" value="Chromosome"/>
</dbReference>
<dbReference type="GO" id="GO:0005524">
    <property type="term" value="F:ATP binding"/>
    <property type="evidence" value="ECO:0007669"/>
    <property type="project" value="UniProtKB-KW"/>
</dbReference>
<dbReference type="GO" id="GO:0004639">
    <property type="term" value="F:phosphoribosylaminoimidazolesuccinocarboxamide synthase activity"/>
    <property type="evidence" value="ECO:0007669"/>
    <property type="project" value="UniProtKB-UniRule"/>
</dbReference>
<dbReference type="GO" id="GO:0006189">
    <property type="term" value="P:'de novo' IMP biosynthetic process"/>
    <property type="evidence" value="ECO:0007669"/>
    <property type="project" value="UniProtKB-UniRule"/>
</dbReference>
<dbReference type="GO" id="GO:0009236">
    <property type="term" value="P:cobalamin biosynthetic process"/>
    <property type="evidence" value="ECO:0007669"/>
    <property type="project" value="InterPro"/>
</dbReference>
<dbReference type="CDD" id="cd01415">
    <property type="entry name" value="SAICAR_synt_PurC"/>
    <property type="match status" value="1"/>
</dbReference>
<dbReference type="FunFam" id="3.30.200.20:FF:000189">
    <property type="entry name" value="Phosphoribosylaminoimidazole-succinocarboxamide synthase"/>
    <property type="match status" value="1"/>
</dbReference>
<dbReference type="FunFam" id="3.30.470.20:FF:000006">
    <property type="entry name" value="Phosphoribosylaminoimidazole-succinocarboxamide synthase"/>
    <property type="match status" value="1"/>
</dbReference>
<dbReference type="Gene3D" id="3.30.470.20">
    <property type="entry name" value="ATP-grasp fold, B domain"/>
    <property type="match status" value="1"/>
</dbReference>
<dbReference type="Gene3D" id="3.30.200.20">
    <property type="entry name" value="Phosphorylase Kinase, domain 1"/>
    <property type="match status" value="1"/>
</dbReference>
<dbReference type="HAMAP" id="MF_00137">
    <property type="entry name" value="SAICAR_synth"/>
    <property type="match status" value="1"/>
</dbReference>
<dbReference type="InterPro" id="IPR028923">
    <property type="entry name" value="SAICAR_synt/ADE2_N"/>
</dbReference>
<dbReference type="InterPro" id="IPR033934">
    <property type="entry name" value="SAICAR_synt_PurC"/>
</dbReference>
<dbReference type="InterPro" id="IPR001636">
    <property type="entry name" value="SAICAR_synth"/>
</dbReference>
<dbReference type="InterPro" id="IPR050089">
    <property type="entry name" value="SAICAR_synthetase"/>
</dbReference>
<dbReference type="InterPro" id="IPR018236">
    <property type="entry name" value="SAICAR_synthetase_CS"/>
</dbReference>
<dbReference type="NCBIfam" id="TIGR00081">
    <property type="entry name" value="purC"/>
    <property type="match status" value="1"/>
</dbReference>
<dbReference type="PANTHER" id="PTHR43599">
    <property type="entry name" value="MULTIFUNCTIONAL PROTEIN ADE2"/>
    <property type="match status" value="1"/>
</dbReference>
<dbReference type="PANTHER" id="PTHR43599:SF3">
    <property type="entry name" value="SI:DKEY-6E2.2"/>
    <property type="match status" value="1"/>
</dbReference>
<dbReference type="Pfam" id="PF01259">
    <property type="entry name" value="SAICAR_synt"/>
    <property type="match status" value="1"/>
</dbReference>
<dbReference type="SUPFAM" id="SSF56104">
    <property type="entry name" value="SAICAR synthase-like"/>
    <property type="match status" value="1"/>
</dbReference>
<dbReference type="PROSITE" id="PS01057">
    <property type="entry name" value="SAICAR_SYNTHETASE_1"/>
    <property type="match status" value="1"/>
</dbReference>
<dbReference type="PROSITE" id="PS01058">
    <property type="entry name" value="SAICAR_SYNTHETASE_2"/>
    <property type="match status" value="1"/>
</dbReference>
<proteinExistence type="inferred from homology"/>
<protein>
    <recommendedName>
        <fullName evidence="1">Phosphoribosylaminoimidazole-succinocarboxamide synthase</fullName>
        <ecNumber evidence="1">6.3.2.6</ecNumber>
    </recommendedName>
    <alternativeName>
        <fullName evidence="1">SAICAR synthetase</fullName>
    </alternativeName>
</protein>
<reference key="1">
    <citation type="journal article" date="2008" name="Chem. Biol. Interact.">
        <title>Extending the Bacillus cereus group genomics to putative food-borne pathogens of different toxicity.</title>
        <authorList>
            <person name="Lapidus A."/>
            <person name="Goltsman E."/>
            <person name="Auger S."/>
            <person name="Galleron N."/>
            <person name="Segurens B."/>
            <person name="Dossat C."/>
            <person name="Land M.L."/>
            <person name="Broussolle V."/>
            <person name="Brillard J."/>
            <person name="Guinebretiere M.-H."/>
            <person name="Sanchis V."/>
            <person name="Nguen-the C."/>
            <person name="Lereclus D."/>
            <person name="Richardson P."/>
            <person name="Wincker P."/>
            <person name="Weissenbach J."/>
            <person name="Ehrlich S.D."/>
            <person name="Sorokin A."/>
        </authorList>
    </citation>
    <scope>NUCLEOTIDE SEQUENCE [LARGE SCALE GENOMIC DNA]</scope>
    <source>
        <strain>DSM 22905 / CIP 110041 / 391-98 / NVH 391-98</strain>
    </source>
</reference>
<organism>
    <name type="scientific">Bacillus cytotoxicus (strain DSM 22905 / CIP 110041 / 391-98 / NVH 391-98)</name>
    <dbReference type="NCBI Taxonomy" id="315749"/>
    <lineage>
        <taxon>Bacteria</taxon>
        <taxon>Bacillati</taxon>
        <taxon>Bacillota</taxon>
        <taxon>Bacilli</taxon>
        <taxon>Bacillales</taxon>
        <taxon>Bacillaceae</taxon>
        <taxon>Bacillus</taxon>
        <taxon>Bacillus cereus group</taxon>
    </lineage>
</organism>